<sequence length="139" mass="15189">MKKGTVLNSEISSVISRLGHTDTLVVCDAGLPIPNSTARIDMALTQGVPSFMQVVDVVTREMQVEAAILATEIKQQNPQLHETLLTHLEQLQQHQGNTIKISYTTHEQFKKLTADSQAVIRSGECSPYANVILCAGVTF</sequence>
<protein>
    <recommendedName>
        <fullName evidence="1">D-ribose pyranase</fullName>
        <ecNumber evidence="1">5.4.99.62</ecNumber>
    </recommendedName>
</protein>
<name>RBSD_SALDC</name>
<organism>
    <name type="scientific">Salmonella dublin (strain CT_02021853)</name>
    <dbReference type="NCBI Taxonomy" id="439851"/>
    <lineage>
        <taxon>Bacteria</taxon>
        <taxon>Pseudomonadati</taxon>
        <taxon>Pseudomonadota</taxon>
        <taxon>Gammaproteobacteria</taxon>
        <taxon>Enterobacterales</taxon>
        <taxon>Enterobacteriaceae</taxon>
        <taxon>Salmonella</taxon>
    </lineage>
</organism>
<feature type="chain" id="PRO_1000187159" description="D-ribose pyranase">
    <location>
        <begin position="1"/>
        <end position="139"/>
    </location>
</feature>
<feature type="active site" description="Proton donor" evidence="1">
    <location>
        <position position="20"/>
    </location>
</feature>
<feature type="binding site" evidence="1">
    <location>
        <position position="28"/>
    </location>
    <ligand>
        <name>substrate</name>
    </ligand>
</feature>
<feature type="binding site" evidence="1">
    <location>
        <position position="106"/>
    </location>
    <ligand>
        <name>substrate</name>
    </ligand>
</feature>
<feature type="binding site" evidence="1">
    <location>
        <begin position="128"/>
        <end position="130"/>
    </location>
    <ligand>
        <name>substrate</name>
    </ligand>
</feature>
<evidence type="ECO:0000255" key="1">
    <source>
        <dbReference type="HAMAP-Rule" id="MF_01661"/>
    </source>
</evidence>
<keyword id="KW-0119">Carbohydrate metabolism</keyword>
<keyword id="KW-0963">Cytoplasm</keyword>
<keyword id="KW-0413">Isomerase</keyword>
<dbReference type="EC" id="5.4.99.62" evidence="1"/>
<dbReference type="EMBL" id="CP001144">
    <property type="protein sequence ID" value="ACH74861.1"/>
    <property type="molecule type" value="Genomic_DNA"/>
</dbReference>
<dbReference type="RefSeq" id="WP_000715944.1">
    <property type="nucleotide sequence ID" value="NC_011205.1"/>
</dbReference>
<dbReference type="SMR" id="B5FN51"/>
<dbReference type="KEGG" id="sed:SeD_A4273"/>
<dbReference type="HOGENOM" id="CLU_135498_0_0_6"/>
<dbReference type="UniPathway" id="UPA00916">
    <property type="reaction ID" value="UER00888"/>
</dbReference>
<dbReference type="Proteomes" id="UP000008322">
    <property type="component" value="Chromosome"/>
</dbReference>
<dbReference type="GO" id="GO:0005829">
    <property type="term" value="C:cytosol"/>
    <property type="evidence" value="ECO:0007669"/>
    <property type="project" value="TreeGrafter"/>
</dbReference>
<dbReference type="GO" id="GO:0062193">
    <property type="term" value="F:D-ribose pyranase activity"/>
    <property type="evidence" value="ECO:0007669"/>
    <property type="project" value="UniProtKB-EC"/>
</dbReference>
<dbReference type="GO" id="GO:0016872">
    <property type="term" value="F:intramolecular lyase activity"/>
    <property type="evidence" value="ECO:0007669"/>
    <property type="project" value="UniProtKB-UniRule"/>
</dbReference>
<dbReference type="GO" id="GO:0048029">
    <property type="term" value="F:monosaccharide binding"/>
    <property type="evidence" value="ECO:0007669"/>
    <property type="project" value="InterPro"/>
</dbReference>
<dbReference type="GO" id="GO:0019303">
    <property type="term" value="P:D-ribose catabolic process"/>
    <property type="evidence" value="ECO:0007669"/>
    <property type="project" value="UniProtKB-UniRule"/>
</dbReference>
<dbReference type="FunFam" id="3.40.1650.10:FF:000002">
    <property type="entry name" value="D-ribose pyranase"/>
    <property type="match status" value="1"/>
</dbReference>
<dbReference type="Gene3D" id="3.40.1650.10">
    <property type="entry name" value="RbsD-like domain"/>
    <property type="match status" value="1"/>
</dbReference>
<dbReference type="HAMAP" id="MF_01661">
    <property type="entry name" value="D_rib_pyranase"/>
    <property type="match status" value="1"/>
</dbReference>
<dbReference type="InterPro" id="IPR023064">
    <property type="entry name" value="D-ribose_pyranase"/>
</dbReference>
<dbReference type="InterPro" id="IPR023750">
    <property type="entry name" value="RbsD-like_sf"/>
</dbReference>
<dbReference type="InterPro" id="IPR007721">
    <property type="entry name" value="RbsD_FucU"/>
</dbReference>
<dbReference type="NCBIfam" id="NF008761">
    <property type="entry name" value="PRK11797.1"/>
    <property type="match status" value="1"/>
</dbReference>
<dbReference type="PANTHER" id="PTHR37831">
    <property type="entry name" value="D-RIBOSE PYRANASE"/>
    <property type="match status" value="1"/>
</dbReference>
<dbReference type="PANTHER" id="PTHR37831:SF1">
    <property type="entry name" value="D-RIBOSE PYRANASE"/>
    <property type="match status" value="1"/>
</dbReference>
<dbReference type="Pfam" id="PF05025">
    <property type="entry name" value="RbsD_FucU"/>
    <property type="match status" value="1"/>
</dbReference>
<dbReference type="SUPFAM" id="SSF102546">
    <property type="entry name" value="RbsD-like"/>
    <property type="match status" value="1"/>
</dbReference>
<reference key="1">
    <citation type="journal article" date="2011" name="J. Bacteriol.">
        <title>Comparative genomics of 28 Salmonella enterica isolates: evidence for CRISPR-mediated adaptive sublineage evolution.</title>
        <authorList>
            <person name="Fricke W.F."/>
            <person name="Mammel M.K."/>
            <person name="McDermott P.F."/>
            <person name="Tartera C."/>
            <person name="White D.G."/>
            <person name="Leclerc J.E."/>
            <person name="Ravel J."/>
            <person name="Cebula T.A."/>
        </authorList>
    </citation>
    <scope>NUCLEOTIDE SEQUENCE [LARGE SCALE GENOMIC DNA]</scope>
    <source>
        <strain>CT_02021853</strain>
    </source>
</reference>
<comment type="function">
    <text evidence="1">Catalyzes the interconversion of beta-pyran and beta-furan forms of D-ribose.</text>
</comment>
<comment type="catalytic activity">
    <reaction evidence="1">
        <text>beta-D-ribopyranose = beta-D-ribofuranose</text>
        <dbReference type="Rhea" id="RHEA:25432"/>
        <dbReference type="ChEBI" id="CHEBI:27476"/>
        <dbReference type="ChEBI" id="CHEBI:47002"/>
        <dbReference type="EC" id="5.4.99.62"/>
    </reaction>
</comment>
<comment type="pathway">
    <text evidence="1">Carbohydrate metabolism; D-ribose degradation; D-ribose 5-phosphate from beta-D-ribopyranose: step 1/2.</text>
</comment>
<comment type="subunit">
    <text evidence="1">Homodecamer.</text>
</comment>
<comment type="subcellular location">
    <subcellularLocation>
        <location evidence="1">Cytoplasm</location>
    </subcellularLocation>
</comment>
<comment type="similarity">
    <text evidence="1">Belongs to the RbsD / FucU family. RbsD subfamily.</text>
</comment>
<accession>B5FN51</accession>
<gene>
    <name evidence="1" type="primary">rbsD</name>
    <name type="ordered locus">SeD_A4273</name>
</gene>
<proteinExistence type="inferred from homology"/>